<organism>
    <name type="scientific">Prochlorococcus marinus (strain NATL1A)</name>
    <dbReference type="NCBI Taxonomy" id="167555"/>
    <lineage>
        <taxon>Bacteria</taxon>
        <taxon>Bacillati</taxon>
        <taxon>Cyanobacteriota</taxon>
        <taxon>Cyanophyceae</taxon>
        <taxon>Synechococcales</taxon>
        <taxon>Prochlorococcaceae</taxon>
        <taxon>Prochlorococcus</taxon>
    </lineage>
</organism>
<accession>A2C4N4</accession>
<sequence>MANTNSAKKRIQIAERNRLENKNYKSTVRTLMKRCFVACGIFEKEPGDESKADLQKTFNLAFSKIDKAVKKGVLHKNTGANQKSRLSVALKKVLKEVV</sequence>
<proteinExistence type="inferred from homology"/>
<name>RS20_PROM1</name>
<protein>
    <recommendedName>
        <fullName evidence="1">Small ribosomal subunit protein bS20</fullName>
    </recommendedName>
    <alternativeName>
        <fullName evidence="2">30S ribosomal protein S20</fullName>
    </alternativeName>
</protein>
<reference key="1">
    <citation type="journal article" date="2007" name="PLoS Genet.">
        <title>Patterns and implications of gene gain and loss in the evolution of Prochlorococcus.</title>
        <authorList>
            <person name="Kettler G.C."/>
            <person name="Martiny A.C."/>
            <person name="Huang K."/>
            <person name="Zucker J."/>
            <person name="Coleman M.L."/>
            <person name="Rodrigue S."/>
            <person name="Chen F."/>
            <person name="Lapidus A."/>
            <person name="Ferriera S."/>
            <person name="Johnson J."/>
            <person name="Steglich C."/>
            <person name="Church G.M."/>
            <person name="Richardson P."/>
            <person name="Chisholm S.W."/>
        </authorList>
    </citation>
    <scope>NUCLEOTIDE SEQUENCE [LARGE SCALE GENOMIC DNA]</scope>
    <source>
        <strain>NATL1A</strain>
    </source>
</reference>
<keyword id="KW-0687">Ribonucleoprotein</keyword>
<keyword id="KW-0689">Ribosomal protein</keyword>
<keyword id="KW-0694">RNA-binding</keyword>
<keyword id="KW-0699">rRNA-binding</keyword>
<evidence type="ECO:0000255" key="1">
    <source>
        <dbReference type="HAMAP-Rule" id="MF_00500"/>
    </source>
</evidence>
<evidence type="ECO:0000305" key="2"/>
<dbReference type="EMBL" id="CP000553">
    <property type="protein sequence ID" value="ABM76444.1"/>
    <property type="molecule type" value="Genomic_DNA"/>
</dbReference>
<dbReference type="RefSeq" id="WP_011295363.1">
    <property type="nucleotide sequence ID" value="NC_008819.1"/>
</dbReference>
<dbReference type="SMR" id="A2C4N4"/>
<dbReference type="KEGG" id="pme:NATL1_18881"/>
<dbReference type="eggNOG" id="COG0268">
    <property type="taxonomic scope" value="Bacteria"/>
</dbReference>
<dbReference type="HOGENOM" id="CLU_160655_5_0_3"/>
<dbReference type="Proteomes" id="UP000002592">
    <property type="component" value="Chromosome"/>
</dbReference>
<dbReference type="GO" id="GO:0015935">
    <property type="term" value="C:small ribosomal subunit"/>
    <property type="evidence" value="ECO:0007669"/>
    <property type="project" value="TreeGrafter"/>
</dbReference>
<dbReference type="GO" id="GO:0070181">
    <property type="term" value="F:small ribosomal subunit rRNA binding"/>
    <property type="evidence" value="ECO:0007669"/>
    <property type="project" value="TreeGrafter"/>
</dbReference>
<dbReference type="GO" id="GO:0003735">
    <property type="term" value="F:structural constituent of ribosome"/>
    <property type="evidence" value="ECO:0007669"/>
    <property type="project" value="InterPro"/>
</dbReference>
<dbReference type="GO" id="GO:0006412">
    <property type="term" value="P:translation"/>
    <property type="evidence" value="ECO:0007669"/>
    <property type="project" value="UniProtKB-UniRule"/>
</dbReference>
<dbReference type="FunFam" id="1.20.58.110:FF:000001">
    <property type="entry name" value="30S ribosomal protein S20"/>
    <property type="match status" value="1"/>
</dbReference>
<dbReference type="Gene3D" id="1.20.58.110">
    <property type="entry name" value="Ribosomal protein S20"/>
    <property type="match status" value="1"/>
</dbReference>
<dbReference type="HAMAP" id="MF_00500">
    <property type="entry name" value="Ribosomal_bS20"/>
    <property type="match status" value="1"/>
</dbReference>
<dbReference type="InterPro" id="IPR002583">
    <property type="entry name" value="Ribosomal_bS20"/>
</dbReference>
<dbReference type="InterPro" id="IPR036510">
    <property type="entry name" value="Ribosomal_bS20_sf"/>
</dbReference>
<dbReference type="NCBIfam" id="TIGR00029">
    <property type="entry name" value="S20"/>
    <property type="match status" value="1"/>
</dbReference>
<dbReference type="PANTHER" id="PTHR33398">
    <property type="entry name" value="30S RIBOSOMAL PROTEIN S20"/>
    <property type="match status" value="1"/>
</dbReference>
<dbReference type="PANTHER" id="PTHR33398:SF1">
    <property type="entry name" value="SMALL RIBOSOMAL SUBUNIT PROTEIN BS20C"/>
    <property type="match status" value="1"/>
</dbReference>
<dbReference type="Pfam" id="PF01649">
    <property type="entry name" value="Ribosomal_S20p"/>
    <property type="match status" value="1"/>
</dbReference>
<dbReference type="SUPFAM" id="SSF46992">
    <property type="entry name" value="Ribosomal protein S20"/>
    <property type="match status" value="1"/>
</dbReference>
<comment type="function">
    <text evidence="1">Binds directly to 16S ribosomal RNA.</text>
</comment>
<comment type="similarity">
    <text evidence="1">Belongs to the bacterial ribosomal protein bS20 family.</text>
</comment>
<feature type="chain" id="PRO_1000014625" description="Small ribosomal subunit protein bS20">
    <location>
        <begin position="1"/>
        <end position="98"/>
    </location>
</feature>
<gene>
    <name evidence="1" type="primary">rpsT</name>
    <name evidence="1" type="synonym">rps20</name>
    <name type="ordered locus">NATL1_18881</name>
</gene>